<evidence type="ECO:0000255" key="1">
    <source>
        <dbReference type="HAMAP-Rule" id="MF_00600"/>
    </source>
</evidence>
<evidence type="ECO:0000256" key="2">
    <source>
        <dbReference type="SAM" id="MobiDB-lite"/>
    </source>
</evidence>
<name>CH60_BUCA5</name>
<reference key="1">
    <citation type="journal article" date="2009" name="Science">
        <title>The dynamics and time scale of ongoing genomic erosion in symbiotic bacteria.</title>
        <authorList>
            <person name="Moran N.A."/>
            <person name="McLaughlin H.J."/>
            <person name="Sorek R."/>
        </authorList>
    </citation>
    <scope>NUCLEOTIDE SEQUENCE [LARGE SCALE GENOMIC DNA]</scope>
    <source>
        <strain>5A</strain>
    </source>
</reference>
<sequence>MAAKDVKFGNEARIKMLRGVNVLADAVKVTLGPKGRNVVLDKSFGAPSITKDGVSVAREIELEDKFENMGAQMVKEVASKANDAAGDGTTTATLLAQSIVNEGLKAVAAGMNPMDLKRGIDKAVISAVEELKHLSVPCSDSKAITQVGTISANADEKVGSLIAEAMEKVGNDGVITVEEGTGLQDELEVVKGMQFDRGYLSPYFINKPETGIVELENPYILMADKKISNVREMLPILESVAKSGKPLLIISEDLEGEALATLVVNSMRGIVKVAAVKAPGFGDRRKAMLQDISILTGGSVISEELAMELEKSTLEDLGQAKRVVISKDTTTIIGGVGEKHSIQSRISQIRQEIQEATSDYDKEKLNERLAKLSGGVAVLKVGAATEVEMKEKKARVEDALHATRAAVEEGVVAGGGVALVRVAGKIADLRGQNEDQNVGIRVALRAMEAPLRQIVSNSGEEPSVVTNNVKDGKGNYGYNAATDEYGDMIDFGILDPTKVTRSALQYAASVAGLMITTECMVTDLPKEDKSSDSSSSPAGGMGGMGGMM</sequence>
<comment type="function">
    <text evidence="1">Together with its co-chaperonin GroES, plays an essential role in assisting protein folding. The GroEL-GroES system forms a nano-cage that allows encapsulation of the non-native substrate proteins and provides a physical environment optimized to promote and accelerate protein folding.</text>
</comment>
<comment type="catalytic activity">
    <reaction evidence="1">
        <text>ATP + H2O + a folded polypeptide = ADP + phosphate + an unfolded polypeptide.</text>
        <dbReference type="EC" id="5.6.1.7"/>
    </reaction>
</comment>
<comment type="subunit">
    <text evidence="1">Forms a cylinder of 14 subunits composed of two heptameric rings stacked back-to-back. Interacts with the co-chaperonin GroES.</text>
</comment>
<comment type="subcellular location">
    <subcellularLocation>
        <location evidence="1">Cytoplasm</location>
    </subcellularLocation>
</comment>
<comment type="similarity">
    <text evidence="1">Belongs to the chaperonin (HSP60) family.</text>
</comment>
<accession>B8D8I2</accession>
<feature type="chain" id="PRO_1000147021" description="Chaperonin GroEL">
    <location>
        <begin position="1"/>
        <end position="548"/>
    </location>
</feature>
<feature type="region of interest" description="Disordered" evidence="2">
    <location>
        <begin position="524"/>
        <end position="548"/>
    </location>
</feature>
<feature type="compositionally biased region" description="Gly residues" evidence="2">
    <location>
        <begin position="539"/>
        <end position="548"/>
    </location>
</feature>
<feature type="binding site" evidence="1">
    <location>
        <begin position="30"/>
        <end position="33"/>
    </location>
    <ligand>
        <name>ATP</name>
        <dbReference type="ChEBI" id="CHEBI:30616"/>
    </ligand>
</feature>
<feature type="binding site" evidence="1">
    <location>
        <position position="51"/>
    </location>
    <ligand>
        <name>ATP</name>
        <dbReference type="ChEBI" id="CHEBI:30616"/>
    </ligand>
</feature>
<feature type="binding site" evidence="1">
    <location>
        <begin position="87"/>
        <end position="91"/>
    </location>
    <ligand>
        <name>ATP</name>
        <dbReference type="ChEBI" id="CHEBI:30616"/>
    </ligand>
</feature>
<feature type="binding site" evidence="1">
    <location>
        <position position="415"/>
    </location>
    <ligand>
        <name>ATP</name>
        <dbReference type="ChEBI" id="CHEBI:30616"/>
    </ligand>
</feature>
<feature type="binding site" evidence="1">
    <location>
        <begin position="479"/>
        <end position="481"/>
    </location>
    <ligand>
        <name>ATP</name>
        <dbReference type="ChEBI" id="CHEBI:30616"/>
    </ligand>
</feature>
<feature type="binding site" evidence="1">
    <location>
        <position position="495"/>
    </location>
    <ligand>
        <name>ATP</name>
        <dbReference type="ChEBI" id="CHEBI:30616"/>
    </ligand>
</feature>
<keyword id="KW-0067">ATP-binding</keyword>
<keyword id="KW-0143">Chaperone</keyword>
<keyword id="KW-0963">Cytoplasm</keyword>
<keyword id="KW-0413">Isomerase</keyword>
<keyword id="KW-0547">Nucleotide-binding</keyword>
<protein>
    <recommendedName>
        <fullName evidence="1">Chaperonin GroEL</fullName>
        <ecNumber evidence="1">5.6.1.7</ecNumber>
    </recommendedName>
    <alternativeName>
        <fullName evidence="1">60 kDa chaperonin</fullName>
    </alternativeName>
    <alternativeName>
        <fullName evidence="1">Chaperonin-60</fullName>
        <shortName evidence="1">Cpn60</shortName>
    </alternativeName>
</protein>
<organism>
    <name type="scientific">Buchnera aphidicola subsp. Acyrthosiphon pisum (strain 5A)</name>
    <dbReference type="NCBI Taxonomy" id="563178"/>
    <lineage>
        <taxon>Bacteria</taxon>
        <taxon>Pseudomonadati</taxon>
        <taxon>Pseudomonadota</taxon>
        <taxon>Gammaproteobacteria</taxon>
        <taxon>Enterobacterales</taxon>
        <taxon>Erwiniaceae</taxon>
        <taxon>Buchnera</taxon>
    </lineage>
</organism>
<gene>
    <name evidence="1" type="primary">groEL</name>
    <name evidence="1" type="synonym">groL</name>
    <name type="ordered locus">BUAP5A_019</name>
</gene>
<dbReference type="EC" id="5.6.1.7" evidence="1"/>
<dbReference type="EMBL" id="CP001161">
    <property type="protein sequence ID" value="ACL30404.1"/>
    <property type="molecule type" value="Genomic_DNA"/>
</dbReference>
<dbReference type="RefSeq" id="WP_009873980.1">
    <property type="nucleotide sequence ID" value="NC_011833.1"/>
</dbReference>
<dbReference type="SMR" id="B8D8I2"/>
<dbReference type="KEGG" id="bap:BUAP5A_019"/>
<dbReference type="HOGENOM" id="CLU_016503_3_0_6"/>
<dbReference type="OrthoDB" id="9766614at2"/>
<dbReference type="Proteomes" id="UP000006904">
    <property type="component" value="Chromosome"/>
</dbReference>
<dbReference type="GO" id="GO:0005737">
    <property type="term" value="C:cytoplasm"/>
    <property type="evidence" value="ECO:0007669"/>
    <property type="project" value="UniProtKB-SubCell"/>
</dbReference>
<dbReference type="GO" id="GO:0005524">
    <property type="term" value="F:ATP binding"/>
    <property type="evidence" value="ECO:0007669"/>
    <property type="project" value="UniProtKB-UniRule"/>
</dbReference>
<dbReference type="GO" id="GO:0140662">
    <property type="term" value="F:ATP-dependent protein folding chaperone"/>
    <property type="evidence" value="ECO:0007669"/>
    <property type="project" value="InterPro"/>
</dbReference>
<dbReference type="GO" id="GO:0016853">
    <property type="term" value="F:isomerase activity"/>
    <property type="evidence" value="ECO:0007669"/>
    <property type="project" value="UniProtKB-KW"/>
</dbReference>
<dbReference type="GO" id="GO:0051082">
    <property type="term" value="F:unfolded protein binding"/>
    <property type="evidence" value="ECO:0007669"/>
    <property type="project" value="UniProtKB-UniRule"/>
</dbReference>
<dbReference type="GO" id="GO:0042026">
    <property type="term" value="P:protein refolding"/>
    <property type="evidence" value="ECO:0007669"/>
    <property type="project" value="UniProtKB-UniRule"/>
</dbReference>
<dbReference type="CDD" id="cd03344">
    <property type="entry name" value="GroEL"/>
    <property type="match status" value="1"/>
</dbReference>
<dbReference type="FunFam" id="1.10.560.10:FF:000001">
    <property type="entry name" value="60 kDa chaperonin"/>
    <property type="match status" value="1"/>
</dbReference>
<dbReference type="FunFam" id="3.50.7.10:FF:000001">
    <property type="entry name" value="60 kDa chaperonin"/>
    <property type="match status" value="1"/>
</dbReference>
<dbReference type="Gene3D" id="3.50.7.10">
    <property type="entry name" value="GroEL"/>
    <property type="match status" value="1"/>
</dbReference>
<dbReference type="Gene3D" id="1.10.560.10">
    <property type="entry name" value="GroEL-like equatorial domain"/>
    <property type="match status" value="1"/>
</dbReference>
<dbReference type="Gene3D" id="3.30.260.10">
    <property type="entry name" value="TCP-1-like chaperonin intermediate domain"/>
    <property type="match status" value="1"/>
</dbReference>
<dbReference type="HAMAP" id="MF_00600">
    <property type="entry name" value="CH60"/>
    <property type="match status" value="1"/>
</dbReference>
<dbReference type="InterPro" id="IPR018370">
    <property type="entry name" value="Chaperonin_Cpn60_CS"/>
</dbReference>
<dbReference type="InterPro" id="IPR001844">
    <property type="entry name" value="Cpn60/GroEL"/>
</dbReference>
<dbReference type="InterPro" id="IPR002423">
    <property type="entry name" value="Cpn60/GroEL/TCP-1"/>
</dbReference>
<dbReference type="InterPro" id="IPR027409">
    <property type="entry name" value="GroEL-like_apical_dom_sf"/>
</dbReference>
<dbReference type="InterPro" id="IPR027413">
    <property type="entry name" value="GROEL-like_equatorial_sf"/>
</dbReference>
<dbReference type="InterPro" id="IPR027410">
    <property type="entry name" value="TCP-1-like_intermed_sf"/>
</dbReference>
<dbReference type="NCBIfam" id="TIGR02348">
    <property type="entry name" value="GroEL"/>
    <property type="match status" value="1"/>
</dbReference>
<dbReference type="NCBIfam" id="NF000592">
    <property type="entry name" value="PRK00013.1"/>
    <property type="match status" value="1"/>
</dbReference>
<dbReference type="NCBIfam" id="NF009487">
    <property type="entry name" value="PRK12849.1"/>
    <property type="match status" value="1"/>
</dbReference>
<dbReference type="NCBIfam" id="NF009488">
    <property type="entry name" value="PRK12850.1"/>
    <property type="match status" value="1"/>
</dbReference>
<dbReference type="NCBIfam" id="NF009489">
    <property type="entry name" value="PRK12851.1"/>
    <property type="match status" value="1"/>
</dbReference>
<dbReference type="PANTHER" id="PTHR45633">
    <property type="entry name" value="60 KDA HEAT SHOCK PROTEIN, MITOCHONDRIAL"/>
    <property type="match status" value="1"/>
</dbReference>
<dbReference type="Pfam" id="PF00118">
    <property type="entry name" value="Cpn60_TCP1"/>
    <property type="match status" value="1"/>
</dbReference>
<dbReference type="PRINTS" id="PR00298">
    <property type="entry name" value="CHAPERONIN60"/>
</dbReference>
<dbReference type="SUPFAM" id="SSF52029">
    <property type="entry name" value="GroEL apical domain-like"/>
    <property type="match status" value="1"/>
</dbReference>
<dbReference type="SUPFAM" id="SSF48592">
    <property type="entry name" value="GroEL equatorial domain-like"/>
    <property type="match status" value="1"/>
</dbReference>
<dbReference type="SUPFAM" id="SSF54849">
    <property type="entry name" value="GroEL-intermediate domain like"/>
    <property type="match status" value="1"/>
</dbReference>
<dbReference type="PROSITE" id="PS00296">
    <property type="entry name" value="CHAPERONINS_CPN60"/>
    <property type="match status" value="1"/>
</dbReference>
<proteinExistence type="inferred from homology"/>